<accession>A5I748</accession>
<accession>A7G8D3</accession>
<reference key="1">
    <citation type="journal article" date="2007" name="Genome Res.">
        <title>Genome sequence of a proteolytic (Group I) Clostridium botulinum strain Hall A and comparative analysis of the clostridial genomes.</title>
        <authorList>
            <person name="Sebaihia M."/>
            <person name="Peck M.W."/>
            <person name="Minton N.P."/>
            <person name="Thomson N.R."/>
            <person name="Holden M.T.G."/>
            <person name="Mitchell W.J."/>
            <person name="Carter A.T."/>
            <person name="Bentley S.D."/>
            <person name="Mason D.R."/>
            <person name="Crossman L."/>
            <person name="Paul C.J."/>
            <person name="Ivens A."/>
            <person name="Wells-Bennik M.H.J."/>
            <person name="Davis I.J."/>
            <person name="Cerdeno-Tarraga A.M."/>
            <person name="Churcher C."/>
            <person name="Quail M.A."/>
            <person name="Chillingworth T."/>
            <person name="Feltwell T."/>
            <person name="Fraser A."/>
            <person name="Goodhead I."/>
            <person name="Hance Z."/>
            <person name="Jagels K."/>
            <person name="Larke N."/>
            <person name="Maddison M."/>
            <person name="Moule S."/>
            <person name="Mungall K."/>
            <person name="Norbertczak H."/>
            <person name="Rabbinowitsch E."/>
            <person name="Sanders M."/>
            <person name="Simmonds M."/>
            <person name="White B."/>
            <person name="Whithead S."/>
            <person name="Parkhill J."/>
        </authorList>
    </citation>
    <scope>NUCLEOTIDE SEQUENCE [LARGE SCALE GENOMIC DNA]</scope>
    <source>
        <strain>Hall / ATCC 3502 / NCTC 13319 / Type A</strain>
    </source>
</reference>
<reference key="2">
    <citation type="journal article" date="2007" name="PLoS ONE">
        <title>Analysis of the neurotoxin complex genes in Clostridium botulinum A1-A4 and B1 strains: BoNT/A3, /Ba4 and /B1 clusters are located within plasmids.</title>
        <authorList>
            <person name="Smith T.J."/>
            <person name="Hill K.K."/>
            <person name="Foley B.T."/>
            <person name="Detter J.C."/>
            <person name="Munk A.C."/>
            <person name="Bruce D.C."/>
            <person name="Doggett N.A."/>
            <person name="Smith L.A."/>
            <person name="Marks J.D."/>
            <person name="Xie G."/>
            <person name="Brettin T.S."/>
        </authorList>
    </citation>
    <scope>NUCLEOTIDE SEQUENCE [LARGE SCALE GENOMIC DNA]</scope>
    <source>
        <strain>Hall / ATCC 3502 / NCTC 13319 / Type A</strain>
    </source>
</reference>
<evidence type="ECO:0000255" key="1">
    <source>
        <dbReference type="HAMAP-Rule" id="MF_02006"/>
    </source>
</evidence>
<feature type="chain" id="PRO_1000189275" description="Tyrosine--tRNA ligase">
    <location>
        <begin position="1"/>
        <end position="407"/>
    </location>
</feature>
<feature type="domain" description="S4 RNA-binding" evidence="1">
    <location>
        <begin position="341"/>
        <end position="405"/>
    </location>
</feature>
<feature type="short sequence motif" description="'HIGH' region">
    <location>
        <begin position="40"/>
        <end position="49"/>
    </location>
</feature>
<feature type="short sequence motif" description="'KMSKS' region">
    <location>
        <begin position="228"/>
        <end position="232"/>
    </location>
</feature>
<feature type="binding site" evidence="1">
    <location>
        <position position="35"/>
    </location>
    <ligand>
        <name>L-tyrosine</name>
        <dbReference type="ChEBI" id="CHEBI:58315"/>
    </ligand>
</feature>
<feature type="binding site" evidence="1">
    <location>
        <position position="168"/>
    </location>
    <ligand>
        <name>L-tyrosine</name>
        <dbReference type="ChEBI" id="CHEBI:58315"/>
    </ligand>
</feature>
<feature type="binding site" evidence="1">
    <location>
        <position position="172"/>
    </location>
    <ligand>
        <name>L-tyrosine</name>
        <dbReference type="ChEBI" id="CHEBI:58315"/>
    </ligand>
</feature>
<feature type="binding site" evidence="1">
    <location>
        <position position="231"/>
    </location>
    <ligand>
        <name>ATP</name>
        <dbReference type="ChEBI" id="CHEBI:30616"/>
    </ligand>
</feature>
<protein>
    <recommendedName>
        <fullName evidence="1">Tyrosine--tRNA ligase</fullName>
        <ecNumber evidence="1">6.1.1.1</ecNumber>
    </recommendedName>
    <alternativeName>
        <fullName evidence="1">Tyrosyl-tRNA synthetase</fullName>
        <shortName evidence="1">TyrRS</shortName>
    </alternativeName>
</protein>
<comment type="function">
    <text evidence="1">Catalyzes the attachment of tyrosine to tRNA(Tyr) in a two-step reaction: tyrosine is first activated by ATP to form Tyr-AMP and then transferred to the acceptor end of tRNA(Tyr).</text>
</comment>
<comment type="catalytic activity">
    <reaction evidence="1">
        <text>tRNA(Tyr) + L-tyrosine + ATP = L-tyrosyl-tRNA(Tyr) + AMP + diphosphate + H(+)</text>
        <dbReference type="Rhea" id="RHEA:10220"/>
        <dbReference type="Rhea" id="RHEA-COMP:9706"/>
        <dbReference type="Rhea" id="RHEA-COMP:9707"/>
        <dbReference type="ChEBI" id="CHEBI:15378"/>
        <dbReference type="ChEBI" id="CHEBI:30616"/>
        <dbReference type="ChEBI" id="CHEBI:33019"/>
        <dbReference type="ChEBI" id="CHEBI:58315"/>
        <dbReference type="ChEBI" id="CHEBI:78442"/>
        <dbReference type="ChEBI" id="CHEBI:78536"/>
        <dbReference type="ChEBI" id="CHEBI:456215"/>
        <dbReference type="EC" id="6.1.1.1"/>
    </reaction>
</comment>
<comment type="subunit">
    <text evidence="1">Homodimer.</text>
</comment>
<comment type="subcellular location">
    <subcellularLocation>
        <location evidence="1">Cytoplasm</location>
    </subcellularLocation>
</comment>
<comment type="similarity">
    <text evidence="1">Belongs to the class-I aminoacyl-tRNA synthetase family. TyrS type 1 subfamily.</text>
</comment>
<name>SYY_CLOBH</name>
<proteinExistence type="inferred from homology"/>
<keyword id="KW-0030">Aminoacyl-tRNA synthetase</keyword>
<keyword id="KW-0067">ATP-binding</keyword>
<keyword id="KW-0963">Cytoplasm</keyword>
<keyword id="KW-0436">Ligase</keyword>
<keyword id="KW-0547">Nucleotide-binding</keyword>
<keyword id="KW-0648">Protein biosynthesis</keyword>
<keyword id="KW-1185">Reference proteome</keyword>
<keyword id="KW-0694">RNA-binding</keyword>
<gene>
    <name evidence="1" type="primary">tyrS</name>
    <name type="ordered locus">CBO3323</name>
    <name type="ordered locus">CLC_3268</name>
</gene>
<sequence>MSNVYDILKERGYIKQLTHEEEIRELLGKEKISFYIGFDPTADSLHVGHFLQMMVMAHMQKAGHRPIALVGGGTGMIGDPTGKTDMRKMMTKEQIEHNCNCFKKQLAKIIDFSEDKAIMVNNADWLLNLNYIEFLREIGVHFSVNKMLTAECFKSRLEKGLSFLEFNYMLMQGYDFLELNRKYNCVMELGGDDQWSNILAGVDLIRRKESKSAYGMTFTLLTNSEGKKMGKTESGALWLDPEKTSPYEFYQYWRNVADADVEKCLRLITFLPMDEVRRLSSLEGAEINEAKKVLAFEVTKLIHGEEEAQKAKIAAEALFGGNAKDLGNMPTAYIDKNDLNNLLVDLLVKCEILPSKSEARRLIKQGGLYLNDEKVTDMNLVVTEEHVTEDGIMIRRGKKNFNRIVVE</sequence>
<dbReference type="EC" id="6.1.1.1" evidence="1"/>
<dbReference type="EMBL" id="CP000727">
    <property type="protein sequence ID" value="ABS36295.1"/>
    <property type="molecule type" value="Genomic_DNA"/>
</dbReference>
<dbReference type="EMBL" id="AM412317">
    <property type="protein sequence ID" value="CAL84881.1"/>
    <property type="molecule type" value="Genomic_DNA"/>
</dbReference>
<dbReference type="RefSeq" id="WP_012048264.1">
    <property type="nucleotide sequence ID" value="NC_009698.1"/>
</dbReference>
<dbReference type="RefSeq" id="YP_001255807.1">
    <property type="nucleotide sequence ID" value="NC_009495.1"/>
</dbReference>
<dbReference type="RefSeq" id="YP_001389048.1">
    <property type="nucleotide sequence ID" value="NC_009698.1"/>
</dbReference>
<dbReference type="SMR" id="A5I748"/>
<dbReference type="GeneID" id="5187577"/>
<dbReference type="KEGG" id="cbh:CLC_3268"/>
<dbReference type="KEGG" id="cbo:CBO3323"/>
<dbReference type="PATRIC" id="fig|413999.7.peg.3299"/>
<dbReference type="HOGENOM" id="CLU_024003_0_3_9"/>
<dbReference type="PRO" id="PR:A5I748"/>
<dbReference type="Proteomes" id="UP000001986">
    <property type="component" value="Chromosome"/>
</dbReference>
<dbReference type="GO" id="GO:0005737">
    <property type="term" value="C:cytoplasm"/>
    <property type="evidence" value="ECO:0000318"/>
    <property type="project" value="GO_Central"/>
</dbReference>
<dbReference type="GO" id="GO:0005524">
    <property type="term" value="F:ATP binding"/>
    <property type="evidence" value="ECO:0007669"/>
    <property type="project" value="UniProtKB-UniRule"/>
</dbReference>
<dbReference type="GO" id="GO:0003723">
    <property type="term" value="F:RNA binding"/>
    <property type="evidence" value="ECO:0007669"/>
    <property type="project" value="UniProtKB-KW"/>
</dbReference>
<dbReference type="GO" id="GO:0004830">
    <property type="term" value="F:tryptophan-tRNA ligase activity"/>
    <property type="evidence" value="ECO:0000318"/>
    <property type="project" value="GO_Central"/>
</dbReference>
<dbReference type="GO" id="GO:0004831">
    <property type="term" value="F:tyrosine-tRNA ligase activity"/>
    <property type="evidence" value="ECO:0007669"/>
    <property type="project" value="UniProtKB-UniRule"/>
</dbReference>
<dbReference type="GO" id="GO:0006436">
    <property type="term" value="P:tryptophanyl-tRNA aminoacylation"/>
    <property type="evidence" value="ECO:0000318"/>
    <property type="project" value="GO_Central"/>
</dbReference>
<dbReference type="GO" id="GO:0006437">
    <property type="term" value="P:tyrosyl-tRNA aminoacylation"/>
    <property type="evidence" value="ECO:0007669"/>
    <property type="project" value="UniProtKB-UniRule"/>
</dbReference>
<dbReference type="CDD" id="cd00165">
    <property type="entry name" value="S4"/>
    <property type="match status" value="1"/>
</dbReference>
<dbReference type="CDD" id="cd00805">
    <property type="entry name" value="TyrRS_core"/>
    <property type="match status" value="1"/>
</dbReference>
<dbReference type="FunFam" id="1.10.240.10:FF:000001">
    <property type="entry name" value="Tyrosine--tRNA ligase"/>
    <property type="match status" value="1"/>
</dbReference>
<dbReference type="FunFam" id="3.10.290.10:FF:000022">
    <property type="entry name" value="Tyrosine--tRNA ligase"/>
    <property type="match status" value="1"/>
</dbReference>
<dbReference type="FunFam" id="3.40.50.620:FF:000008">
    <property type="entry name" value="Tyrosine--tRNA ligase"/>
    <property type="match status" value="1"/>
</dbReference>
<dbReference type="Gene3D" id="3.40.50.620">
    <property type="entry name" value="HUPs"/>
    <property type="match status" value="1"/>
</dbReference>
<dbReference type="Gene3D" id="3.10.290.10">
    <property type="entry name" value="RNA-binding S4 domain"/>
    <property type="match status" value="1"/>
</dbReference>
<dbReference type="Gene3D" id="1.10.240.10">
    <property type="entry name" value="Tyrosyl-Transfer RNA Synthetase"/>
    <property type="match status" value="1"/>
</dbReference>
<dbReference type="HAMAP" id="MF_02006">
    <property type="entry name" value="Tyr_tRNA_synth_type1"/>
    <property type="match status" value="1"/>
</dbReference>
<dbReference type="InterPro" id="IPR001412">
    <property type="entry name" value="aa-tRNA-synth_I_CS"/>
</dbReference>
<dbReference type="InterPro" id="IPR002305">
    <property type="entry name" value="aa-tRNA-synth_Ic"/>
</dbReference>
<dbReference type="InterPro" id="IPR014729">
    <property type="entry name" value="Rossmann-like_a/b/a_fold"/>
</dbReference>
<dbReference type="InterPro" id="IPR036986">
    <property type="entry name" value="S4_RNA-bd_sf"/>
</dbReference>
<dbReference type="InterPro" id="IPR054608">
    <property type="entry name" value="SYY-like_C"/>
</dbReference>
<dbReference type="InterPro" id="IPR002307">
    <property type="entry name" value="Tyr-tRNA-ligase"/>
</dbReference>
<dbReference type="InterPro" id="IPR024088">
    <property type="entry name" value="Tyr-tRNA-ligase_bac-type"/>
</dbReference>
<dbReference type="InterPro" id="IPR024107">
    <property type="entry name" value="Tyr-tRNA-ligase_bac_1"/>
</dbReference>
<dbReference type="NCBIfam" id="TIGR00234">
    <property type="entry name" value="tyrS"/>
    <property type="match status" value="1"/>
</dbReference>
<dbReference type="PANTHER" id="PTHR11766:SF0">
    <property type="entry name" value="TYROSINE--TRNA LIGASE, MITOCHONDRIAL"/>
    <property type="match status" value="1"/>
</dbReference>
<dbReference type="PANTHER" id="PTHR11766">
    <property type="entry name" value="TYROSYL-TRNA SYNTHETASE"/>
    <property type="match status" value="1"/>
</dbReference>
<dbReference type="Pfam" id="PF22421">
    <property type="entry name" value="SYY_C-terminal"/>
    <property type="match status" value="1"/>
</dbReference>
<dbReference type="Pfam" id="PF00579">
    <property type="entry name" value="tRNA-synt_1b"/>
    <property type="match status" value="1"/>
</dbReference>
<dbReference type="PRINTS" id="PR01040">
    <property type="entry name" value="TRNASYNTHTYR"/>
</dbReference>
<dbReference type="SUPFAM" id="SSF55174">
    <property type="entry name" value="Alpha-L RNA-binding motif"/>
    <property type="match status" value="1"/>
</dbReference>
<dbReference type="SUPFAM" id="SSF52374">
    <property type="entry name" value="Nucleotidylyl transferase"/>
    <property type="match status" value="1"/>
</dbReference>
<dbReference type="PROSITE" id="PS00178">
    <property type="entry name" value="AA_TRNA_LIGASE_I"/>
    <property type="match status" value="1"/>
</dbReference>
<dbReference type="PROSITE" id="PS50889">
    <property type="entry name" value="S4"/>
    <property type="match status" value="1"/>
</dbReference>
<organism>
    <name type="scientific">Clostridium botulinum (strain Hall / ATCC 3502 / NCTC 13319 / Type A)</name>
    <dbReference type="NCBI Taxonomy" id="441771"/>
    <lineage>
        <taxon>Bacteria</taxon>
        <taxon>Bacillati</taxon>
        <taxon>Bacillota</taxon>
        <taxon>Clostridia</taxon>
        <taxon>Eubacteriales</taxon>
        <taxon>Clostridiaceae</taxon>
        <taxon>Clostridium</taxon>
    </lineage>
</organism>